<comment type="subcellular location">
    <subcellularLocation>
        <location evidence="1">Secreted</location>
        <location evidence="1">Cell wall</location>
    </subcellularLocation>
</comment>
<proteinExistence type="evidence at protein level"/>
<accession>P80774</accession>
<feature type="chain" id="PRO_0000079675" description="22 kDa cell wall protein">
    <location>
        <begin position="1"/>
        <end position="18" status="greater than"/>
    </location>
</feature>
<feature type="modified residue" description="4-hydroxyproline" evidence="1">
    <location>
        <position position="10"/>
    </location>
</feature>
<feature type="non-terminal residue" evidence="2">
    <location>
        <position position="18"/>
    </location>
</feature>
<organism>
    <name type="scientific">Phaseolus vulgaris</name>
    <name type="common">Kidney bean</name>
    <name type="synonym">French bean</name>
    <dbReference type="NCBI Taxonomy" id="3885"/>
    <lineage>
        <taxon>Eukaryota</taxon>
        <taxon>Viridiplantae</taxon>
        <taxon>Streptophyta</taxon>
        <taxon>Embryophyta</taxon>
        <taxon>Tracheophyta</taxon>
        <taxon>Spermatophyta</taxon>
        <taxon>Magnoliopsida</taxon>
        <taxon>eudicotyledons</taxon>
        <taxon>Gunneridae</taxon>
        <taxon>Pentapetalae</taxon>
        <taxon>rosids</taxon>
        <taxon>fabids</taxon>
        <taxon>Fabales</taxon>
        <taxon>Fabaceae</taxon>
        <taxon>Papilionoideae</taxon>
        <taxon>50 kb inversion clade</taxon>
        <taxon>NPAAA clade</taxon>
        <taxon>indigoferoid/millettioid clade</taxon>
        <taxon>Phaseoleae</taxon>
        <taxon>Phaseolus</taxon>
    </lineage>
</organism>
<protein>
    <recommendedName>
        <fullName>22 kDa cell wall protein</fullName>
    </recommendedName>
</protein>
<name>CWP15_PHAVU</name>
<keyword id="KW-0134">Cell wall</keyword>
<keyword id="KW-0903">Direct protein sequencing</keyword>
<keyword id="KW-0379">Hydroxylation</keyword>
<keyword id="KW-0677">Repeat</keyword>
<keyword id="KW-0964">Secreted</keyword>
<sequence length="18" mass="1982">QNQPPDFANPFIIPQNAA</sequence>
<reference evidence="3" key="1">
    <citation type="journal article" date="1997" name="J. Biol. Chem.">
        <title>Differential extraction and protein sequencing reveals major differences in patterns of primary cell wall proteins from plants.</title>
        <authorList>
            <person name="Robertson D."/>
            <person name="Mitchell G.P."/>
            <person name="Gilroy J.S."/>
            <person name="Gerrish C."/>
            <person name="Bolwell G.P."/>
            <person name="Slabas A.R."/>
        </authorList>
    </citation>
    <scope>PROTEIN SEQUENCE</scope>
    <scope>SUBCELLULAR LOCATION</scope>
    <scope>HYDROXYLATION AT PRO-10</scope>
</reference>
<evidence type="ECO:0000269" key="1">
    <source>
    </source>
</evidence>
<evidence type="ECO:0000303" key="2">
    <source>
    </source>
</evidence>
<evidence type="ECO:0000305" key="3"/>
<dbReference type="GO" id="GO:0005576">
    <property type="term" value="C:extracellular region"/>
    <property type="evidence" value="ECO:0007669"/>
    <property type="project" value="UniProtKB-KW"/>
</dbReference>